<evidence type="ECO:0000255" key="1">
    <source>
        <dbReference type="PROSITE-ProRule" id="PRU00159"/>
    </source>
</evidence>
<evidence type="ECO:0000255" key="2">
    <source>
        <dbReference type="PROSITE-ProRule" id="PRU10027"/>
    </source>
</evidence>
<evidence type="ECO:0000256" key="3">
    <source>
        <dbReference type="SAM" id="MobiDB-lite"/>
    </source>
</evidence>
<evidence type="ECO:0000269" key="4">
    <source>
    </source>
</evidence>
<evidence type="ECO:0000269" key="5">
    <source>
    </source>
</evidence>
<evidence type="ECO:0000269" key="6">
    <source>
    </source>
</evidence>
<evidence type="ECO:0000269" key="7">
    <source>
    </source>
</evidence>
<evidence type="ECO:0000269" key="8">
    <source>
    </source>
</evidence>
<evidence type="ECO:0000269" key="9">
    <source>
    </source>
</evidence>
<evidence type="ECO:0000269" key="10">
    <source>
    </source>
</evidence>
<evidence type="ECO:0000269" key="11">
    <source>
    </source>
</evidence>
<evidence type="ECO:0000269" key="12">
    <source>
    </source>
</evidence>
<evidence type="ECO:0000269" key="13">
    <source>
    </source>
</evidence>
<evidence type="ECO:0000269" key="14">
    <source>
    </source>
</evidence>
<evidence type="ECO:0000269" key="15">
    <source>
    </source>
</evidence>
<evidence type="ECO:0000269" key="16">
    <source>
    </source>
</evidence>
<evidence type="ECO:0000269" key="17">
    <source>
    </source>
</evidence>
<evidence type="ECO:0000269" key="18">
    <source>
    </source>
</evidence>
<evidence type="ECO:0000269" key="19">
    <source>
    </source>
</evidence>
<evidence type="ECO:0000269" key="20">
    <source>
    </source>
</evidence>
<evidence type="ECO:0000269" key="21">
    <source>
    </source>
</evidence>
<evidence type="ECO:0000269" key="22">
    <source>
    </source>
</evidence>
<evidence type="ECO:0000269" key="23">
    <source>
    </source>
</evidence>
<evidence type="ECO:0000269" key="24">
    <source>
    </source>
</evidence>
<evidence type="ECO:0000269" key="25">
    <source>
    </source>
</evidence>
<evidence type="ECO:0000269" key="26">
    <source>
    </source>
</evidence>
<evidence type="ECO:0000269" key="27">
    <source>
    </source>
</evidence>
<evidence type="ECO:0000269" key="28">
    <source>
    </source>
</evidence>
<evidence type="ECO:0000269" key="29">
    <source>
    </source>
</evidence>
<evidence type="ECO:0000269" key="30">
    <source>
    </source>
</evidence>
<evidence type="ECO:0000269" key="31">
    <source>
    </source>
</evidence>
<evidence type="ECO:0000269" key="32">
    <source>
    </source>
</evidence>
<evidence type="ECO:0000269" key="33">
    <source>
    </source>
</evidence>
<evidence type="ECO:0000269" key="34">
    <source>
    </source>
</evidence>
<evidence type="ECO:0000269" key="35">
    <source>
    </source>
</evidence>
<evidence type="ECO:0000269" key="36">
    <source>
    </source>
</evidence>
<evidence type="ECO:0000269" key="37">
    <source>
    </source>
</evidence>
<evidence type="ECO:0000269" key="38">
    <source>
    </source>
</evidence>
<evidence type="ECO:0000269" key="39">
    <source>
    </source>
</evidence>
<evidence type="ECO:0000269" key="40">
    <source>
    </source>
</evidence>
<evidence type="ECO:0000269" key="41">
    <source>
    </source>
</evidence>
<evidence type="ECO:0000269" key="42">
    <source>
    </source>
</evidence>
<evidence type="ECO:0000303" key="43">
    <source>
    </source>
</evidence>
<evidence type="ECO:0000303" key="44">
    <source>
    </source>
</evidence>
<evidence type="ECO:0000303" key="45">
    <source>
    </source>
</evidence>
<evidence type="ECO:0000303" key="46">
    <source>
    </source>
</evidence>
<evidence type="ECO:0000305" key="47"/>
<evidence type="ECO:0000312" key="48">
    <source>
        <dbReference type="SGD" id="S000003148"/>
    </source>
</evidence>
<evidence type="ECO:0007744" key="49">
    <source>
    </source>
</evidence>
<evidence type="ECO:0007744" key="50">
    <source>
    </source>
</evidence>
<evidence type="ECO:0007744" key="51">
    <source>
    </source>
</evidence>
<dbReference type="EC" id="2.7.11.1" evidence="35 36 37"/>
<dbReference type="EMBL" id="X91489">
    <property type="protein sequence ID" value="CAA62794.1"/>
    <property type="molecule type" value="Genomic_DNA"/>
</dbReference>
<dbReference type="EMBL" id="D29991">
    <property type="protein sequence ID" value="BAA21481.1"/>
    <property type="molecule type" value="Genomic_DNA"/>
</dbReference>
<dbReference type="EMBL" id="Z72702">
    <property type="protein sequence ID" value="CAA96892.1"/>
    <property type="molecule type" value="Genomic_DNA"/>
</dbReference>
<dbReference type="EMBL" id="BK006941">
    <property type="protein sequence ID" value="DAA07934.1"/>
    <property type="molecule type" value="Genomic_DNA"/>
</dbReference>
<dbReference type="PIR" id="S61137">
    <property type="entry name" value="S61137"/>
</dbReference>
<dbReference type="RefSeq" id="NP_011335.1">
    <property type="nucleotide sequence ID" value="NM_001181045.1"/>
</dbReference>
<dbReference type="SMR" id="P53104"/>
<dbReference type="BioGRID" id="33074">
    <property type="interactions" value="641"/>
</dbReference>
<dbReference type="ComplexPortal" id="CPX-1676">
    <property type="entry name" value="ATG1/ULK1 protein kinase complex"/>
</dbReference>
<dbReference type="DIP" id="DIP-1192N"/>
<dbReference type="FunCoup" id="P53104">
    <property type="interactions" value="184"/>
</dbReference>
<dbReference type="IntAct" id="P53104">
    <property type="interactions" value="24"/>
</dbReference>
<dbReference type="MINT" id="P53104"/>
<dbReference type="STRING" id="4932.YGL180W"/>
<dbReference type="TCDB" id="9.A.15.1.1">
    <property type="family name" value="the autophagy-related phagophore-formation transporter (apt) family"/>
</dbReference>
<dbReference type="iPTMnet" id="P53104"/>
<dbReference type="PaxDb" id="4932-YGL180W"/>
<dbReference type="PeptideAtlas" id="P53104"/>
<dbReference type="EnsemblFungi" id="YGL180W_mRNA">
    <property type="protein sequence ID" value="YGL180W"/>
    <property type="gene ID" value="YGL180W"/>
</dbReference>
<dbReference type="GeneID" id="852695"/>
<dbReference type="KEGG" id="sce:YGL180W"/>
<dbReference type="AGR" id="SGD:S000003148"/>
<dbReference type="SGD" id="S000003148">
    <property type="gene designation" value="ATG1"/>
</dbReference>
<dbReference type="VEuPathDB" id="FungiDB:YGL180W"/>
<dbReference type="eggNOG" id="KOG0595">
    <property type="taxonomic scope" value="Eukaryota"/>
</dbReference>
<dbReference type="GeneTree" id="ENSGT00940000157689"/>
<dbReference type="HOGENOM" id="CLU_006447_0_0_1"/>
<dbReference type="InParanoid" id="P53104"/>
<dbReference type="OMA" id="INNVVQW"/>
<dbReference type="OrthoDB" id="346907at2759"/>
<dbReference type="BioCyc" id="YEAST:G3O-30667-MONOMER"/>
<dbReference type="BRENDA" id="2.7.11.1">
    <property type="organism ID" value="984"/>
</dbReference>
<dbReference type="Reactome" id="R-SCE-1632852">
    <property type="pathway name" value="Macroautophagy"/>
</dbReference>
<dbReference type="Reactome" id="R-SCE-8934903">
    <property type="pathway name" value="Receptor Mediated Mitophagy"/>
</dbReference>
<dbReference type="BioGRID-ORCS" id="852695">
    <property type="hits" value="6 hits in 13 CRISPR screens"/>
</dbReference>
<dbReference type="CD-CODE" id="4F15E4D1">
    <property type="entry name" value="ATG condensate"/>
</dbReference>
<dbReference type="PRO" id="PR:P53104"/>
<dbReference type="Proteomes" id="UP000002311">
    <property type="component" value="Chromosome VII"/>
</dbReference>
<dbReference type="RNAct" id="P53104">
    <property type="molecule type" value="protein"/>
</dbReference>
<dbReference type="GO" id="GO:1990316">
    <property type="term" value="C:Atg1/ULK1 kinase complex"/>
    <property type="evidence" value="ECO:0000314"/>
    <property type="project" value="SGD"/>
</dbReference>
<dbReference type="GO" id="GO:0005776">
    <property type="term" value="C:autophagosome"/>
    <property type="evidence" value="ECO:0000318"/>
    <property type="project" value="GO_Central"/>
</dbReference>
<dbReference type="GO" id="GO:0000421">
    <property type="term" value="C:autophagosome membrane"/>
    <property type="evidence" value="ECO:0000314"/>
    <property type="project" value="SGD"/>
</dbReference>
<dbReference type="GO" id="GO:0005737">
    <property type="term" value="C:cytoplasm"/>
    <property type="evidence" value="ECO:0000318"/>
    <property type="project" value="GO_Central"/>
</dbReference>
<dbReference type="GO" id="GO:0005829">
    <property type="term" value="C:cytosol"/>
    <property type="evidence" value="ECO:0000314"/>
    <property type="project" value="SGD"/>
</dbReference>
<dbReference type="GO" id="GO:0061908">
    <property type="term" value="C:phagophore"/>
    <property type="evidence" value="ECO:0000314"/>
    <property type="project" value="SGD"/>
</dbReference>
<dbReference type="GO" id="GO:0000407">
    <property type="term" value="C:phagophore assembly site"/>
    <property type="evidence" value="ECO:0000314"/>
    <property type="project" value="SGD"/>
</dbReference>
<dbReference type="GO" id="GO:0034045">
    <property type="term" value="C:phagophore assembly site membrane"/>
    <property type="evidence" value="ECO:0000318"/>
    <property type="project" value="GO_Central"/>
</dbReference>
<dbReference type="GO" id="GO:0120095">
    <property type="term" value="C:vacuole-isolation membrane contact site"/>
    <property type="evidence" value="ECO:0000314"/>
    <property type="project" value="SGD"/>
</dbReference>
<dbReference type="GO" id="GO:0005524">
    <property type="term" value="F:ATP binding"/>
    <property type="evidence" value="ECO:0007669"/>
    <property type="project" value="UniProtKB-KW"/>
</dbReference>
<dbReference type="GO" id="GO:0004672">
    <property type="term" value="F:protein kinase activity"/>
    <property type="evidence" value="ECO:0007005"/>
    <property type="project" value="SGD"/>
</dbReference>
<dbReference type="GO" id="GO:0106310">
    <property type="term" value="F:protein serine kinase activity"/>
    <property type="evidence" value="ECO:0007669"/>
    <property type="project" value="RHEA"/>
</dbReference>
<dbReference type="GO" id="GO:0004674">
    <property type="term" value="F:protein serine/threonine kinase activity"/>
    <property type="evidence" value="ECO:0000314"/>
    <property type="project" value="UniProtKB"/>
</dbReference>
<dbReference type="GO" id="GO:0000045">
    <property type="term" value="P:autophagosome assembly"/>
    <property type="evidence" value="ECO:0000314"/>
    <property type="project" value="SGD"/>
</dbReference>
<dbReference type="GO" id="GO:0006914">
    <property type="term" value="P:autophagy"/>
    <property type="evidence" value="ECO:0000315"/>
    <property type="project" value="SGD"/>
</dbReference>
<dbReference type="GO" id="GO:0000422">
    <property type="term" value="P:autophagy of mitochondrion"/>
    <property type="evidence" value="ECO:0000315"/>
    <property type="project" value="SGD"/>
</dbReference>
<dbReference type="GO" id="GO:0006995">
    <property type="term" value="P:cellular response to nitrogen starvation"/>
    <property type="evidence" value="ECO:0000314"/>
    <property type="project" value="SGD"/>
</dbReference>
<dbReference type="GO" id="GO:0051365">
    <property type="term" value="P:cellular response to potassium ion starvation"/>
    <property type="evidence" value="ECO:0000315"/>
    <property type="project" value="SGD"/>
</dbReference>
<dbReference type="GO" id="GO:0032258">
    <property type="term" value="P:cytoplasm to vacuole targeting by the Cvt pathway"/>
    <property type="evidence" value="ECO:0000315"/>
    <property type="project" value="SGD"/>
</dbReference>
<dbReference type="GO" id="GO:0016236">
    <property type="term" value="P:macroautophagy"/>
    <property type="evidence" value="ECO:0000315"/>
    <property type="project" value="SGD"/>
</dbReference>
<dbReference type="GO" id="GO:0000423">
    <property type="term" value="P:mitophagy"/>
    <property type="evidence" value="ECO:0000318"/>
    <property type="project" value="GO_Central"/>
</dbReference>
<dbReference type="GO" id="GO:0044804">
    <property type="term" value="P:nucleophagy"/>
    <property type="evidence" value="ECO:0000315"/>
    <property type="project" value="SGD"/>
</dbReference>
<dbReference type="GO" id="GO:0034727">
    <property type="term" value="P:piecemeal microautophagy of the nucleus"/>
    <property type="evidence" value="ECO:0000315"/>
    <property type="project" value="SGD"/>
</dbReference>
<dbReference type="GO" id="GO:0034497">
    <property type="term" value="P:protein localization to phagophore assembly site"/>
    <property type="evidence" value="ECO:0000315"/>
    <property type="project" value="SGD"/>
</dbReference>
<dbReference type="GO" id="GO:0010506">
    <property type="term" value="P:regulation of autophagy"/>
    <property type="evidence" value="ECO:0000318"/>
    <property type="project" value="GO_Central"/>
</dbReference>
<dbReference type="GO" id="GO:0042594">
    <property type="term" value="P:response to starvation"/>
    <property type="evidence" value="ECO:0000318"/>
    <property type="project" value="GO_Central"/>
</dbReference>
<dbReference type="GO" id="GO:0061709">
    <property type="term" value="P:reticulophagy"/>
    <property type="evidence" value="ECO:0000315"/>
    <property type="project" value="SGD"/>
</dbReference>
<dbReference type="CDD" id="cd14009">
    <property type="entry name" value="STKc_ATG1_ULK_like"/>
    <property type="match status" value="1"/>
</dbReference>
<dbReference type="DisProt" id="DP03008"/>
<dbReference type="FunFam" id="1.10.510.10:FF:000817">
    <property type="entry name" value="Serine/threonine-protein kinase ATG1"/>
    <property type="match status" value="1"/>
</dbReference>
<dbReference type="FunFam" id="3.30.200.20:FF:000399">
    <property type="entry name" value="Serine/threonine-protein kinase atg1"/>
    <property type="match status" value="1"/>
</dbReference>
<dbReference type="Gene3D" id="3.30.200.20">
    <property type="entry name" value="Phosphorylase Kinase, domain 1"/>
    <property type="match status" value="1"/>
</dbReference>
<dbReference type="Gene3D" id="1.10.510.10">
    <property type="entry name" value="Transferase(Phosphotransferase) domain 1"/>
    <property type="match status" value="1"/>
</dbReference>
<dbReference type="InterPro" id="IPR045269">
    <property type="entry name" value="Atg1-like"/>
</dbReference>
<dbReference type="InterPro" id="IPR048941">
    <property type="entry name" value="ATG1-like_MIT2"/>
</dbReference>
<dbReference type="InterPro" id="IPR022708">
    <property type="entry name" value="Atg1-like_tMIT"/>
</dbReference>
<dbReference type="InterPro" id="IPR011009">
    <property type="entry name" value="Kinase-like_dom_sf"/>
</dbReference>
<dbReference type="InterPro" id="IPR000719">
    <property type="entry name" value="Prot_kinase_dom"/>
</dbReference>
<dbReference type="InterPro" id="IPR017441">
    <property type="entry name" value="Protein_kinase_ATP_BS"/>
</dbReference>
<dbReference type="InterPro" id="IPR008271">
    <property type="entry name" value="Ser/Thr_kinase_AS"/>
</dbReference>
<dbReference type="PANTHER" id="PTHR24348:SF22">
    <property type="entry name" value="NON-SPECIFIC SERINE_THREONINE PROTEIN KINASE"/>
    <property type="match status" value="1"/>
</dbReference>
<dbReference type="PANTHER" id="PTHR24348">
    <property type="entry name" value="SERINE/THREONINE-PROTEIN KINASE UNC-51-RELATED"/>
    <property type="match status" value="1"/>
</dbReference>
<dbReference type="Pfam" id="PF12063">
    <property type="entry name" value="ATG1-like_MIT1"/>
    <property type="match status" value="1"/>
</dbReference>
<dbReference type="Pfam" id="PF21127">
    <property type="entry name" value="ATG1-like_MIT2"/>
    <property type="match status" value="1"/>
</dbReference>
<dbReference type="Pfam" id="PF00069">
    <property type="entry name" value="Pkinase"/>
    <property type="match status" value="1"/>
</dbReference>
<dbReference type="SMART" id="SM00220">
    <property type="entry name" value="S_TKc"/>
    <property type="match status" value="1"/>
</dbReference>
<dbReference type="SUPFAM" id="SSF56112">
    <property type="entry name" value="Protein kinase-like (PK-like)"/>
    <property type="match status" value="1"/>
</dbReference>
<dbReference type="PROSITE" id="PS00107">
    <property type="entry name" value="PROTEIN_KINASE_ATP"/>
    <property type="match status" value="1"/>
</dbReference>
<dbReference type="PROSITE" id="PS50011">
    <property type="entry name" value="PROTEIN_KINASE_DOM"/>
    <property type="match status" value="1"/>
</dbReference>
<dbReference type="PROSITE" id="PS00108">
    <property type="entry name" value="PROTEIN_KINASE_ST"/>
    <property type="match status" value="1"/>
</dbReference>
<reference key="1">
    <citation type="journal article" date="1997" name="Yeast">
        <title>Sequencing of a 40.5 kb fragment located on the left arm of chromosome VII from Saccharomyces cerevisiae.</title>
        <authorList>
            <person name="Coglievina M."/>
            <person name="Klima R."/>
            <person name="Bertani I."/>
            <person name="Delneri D."/>
            <person name="Zaccaria P."/>
            <person name="Bruschi C.V."/>
        </authorList>
    </citation>
    <scope>NUCLEOTIDE SEQUENCE [GENOMIC DNA]</scope>
    <source>
        <strain>ATCC 96604 / S288c / FY1679</strain>
    </source>
</reference>
<reference key="2">
    <citation type="journal article" date="1997" name="Gene">
        <title>Apg1p, a novel protein kinase required for the autophagic process in Saccharomyces cerevisiae.</title>
        <authorList>
            <person name="Matsuura A."/>
            <person name="Tsukada M."/>
            <person name="Wada Y."/>
            <person name="Ohsumi Y."/>
        </authorList>
    </citation>
    <scope>NUCLEOTIDE SEQUENCE [GENOMIC DNA]</scope>
    <scope>FUNCTION</scope>
    <scope>PHOSPHORYLATION</scope>
    <scope>MUTAGENESIS OF ASP-211 AND GLU-237</scope>
    <source>
        <strain>ATCC 26109 / X2180</strain>
    </source>
</reference>
<reference key="3">
    <citation type="journal article" date="1997" name="Nature">
        <title>The nucleotide sequence of Saccharomyces cerevisiae chromosome VII.</title>
        <authorList>
            <person name="Tettelin H."/>
            <person name="Agostoni-Carbone M.L."/>
            <person name="Albermann K."/>
            <person name="Albers M."/>
            <person name="Arroyo J."/>
            <person name="Backes U."/>
            <person name="Barreiros T."/>
            <person name="Bertani I."/>
            <person name="Bjourson A.J."/>
            <person name="Brueckner M."/>
            <person name="Bruschi C.V."/>
            <person name="Carignani G."/>
            <person name="Castagnoli L."/>
            <person name="Cerdan E."/>
            <person name="Clemente M.L."/>
            <person name="Coblenz A."/>
            <person name="Coglievina M."/>
            <person name="Coissac E."/>
            <person name="Defoor E."/>
            <person name="Del Bino S."/>
            <person name="Delius H."/>
            <person name="Delneri D."/>
            <person name="de Wergifosse P."/>
            <person name="Dujon B."/>
            <person name="Durand P."/>
            <person name="Entian K.-D."/>
            <person name="Eraso P."/>
            <person name="Escribano V."/>
            <person name="Fabiani L."/>
            <person name="Fartmann B."/>
            <person name="Feroli F."/>
            <person name="Feuermann M."/>
            <person name="Frontali L."/>
            <person name="Garcia-Gonzalez M."/>
            <person name="Garcia-Saez M.I."/>
            <person name="Goffeau A."/>
            <person name="Guerreiro P."/>
            <person name="Hani J."/>
            <person name="Hansen M."/>
            <person name="Hebling U."/>
            <person name="Hernandez K."/>
            <person name="Heumann K."/>
            <person name="Hilger F."/>
            <person name="Hofmann B."/>
            <person name="Indge K.J."/>
            <person name="James C.M."/>
            <person name="Klima R."/>
            <person name="Koetter P."/>
            <person name="Kramer B."/>
            <person name="Kramer W."/>
            <person name="Lauquin G."/>
            <person name="Leuther H."/>
            <person name="Louis E.J."/>
            <person name="Maillier E."/>
            <person name="Marconi A."/>
            <person name="Martegani E."/>
            <person name="Mazon M.J."/>
            <person name="Mazzoni C."/>
            <person name="McReynolds A.D.K."/>
            <person name="Melchioretto P."/>
            <person name="Mewes H.-W."/>
            <person name="Minenkova O."/>
            <person name="Mueller-Auer S."/>
            <person name="Nawrocki A."/>
            <person name="Netter P."/>
            <person name="Neu R."/>
            <person name="Nombela C."/>
            <person name="Oliver S.G."/>
            <person name="Panzeri L."/>
            <person name="Paoluzi S."/>
            <person name="Plevani P."/>
            <person name="Portetelle D."/>
            <person name="Portillo F."/>
            <person name="Potier S."/>
            <person name="Purnelle B."/>
            <person name="Rieger M."/>
            <person name="Riles L."/>
            <person name="Rinaldi T."/>
            <person name="Robben J."/>
            <person name="Rodrigues-Pousada C."/>
            <person name="Rodriguez-Belmonte E."/>
            <person name="Rodriguez-Torres A.M."/>
            <person name="Rose M."/>
            <person name="Ruzzi M."/>
            <person name="Saliola M."/>
            <person name="Sanchez-Perez M."/>
            <person name="Schaefer B."/>
            <person name="Schaefer M."/>
            <person name="Scharfe M."/>
            <person name="Schmidheini T."/>
            <person name="Schreer A."/>
            <person name="Skala J."/>
            <person name="Souciet J.-L."/>
            <person name="Steensma H.Y."/>
            <person name="Talla E."/>
            <person name="Thierry A."/>
            <person name="Vandenbol M."/>
            <person name="van der Aart Q.J.M."/>
            <person name="Van Dyck L."/>
            <person name="Vanoni M."/>
            <person name="Verhasselt P."/>
            <person name="Voet M."/>
            <person name="Volckaert G."/>
            <person name="Wambutt R."/>
            <person name="Watson M.D."/>
            <person name="Weber N."/>
            <person name="Wedler E."/>
            <person name="Wedler H."/>
            <person name="Wipfli P."/>
            <person name="Wolf K."/>
            <person name="Wright L.F."/>
            <person name="Zaccaria P."/>
            <person name="Zimmermann M."/>
            <person name="Zollner A."/>
            <person name="Kleine K."/>
        </authorList>
    </citation>
    <scope>NUCLEOTIDE SEQUENCE [LARGE SCALE GENOMIC DNA]</scope>
    <source>
        <strain>ATCC 204508 / S288c</strain>
    </source>
</reference>
<reference key="4">
    <citation type="journal article" date="2014" name="G3 (Bethesda)">
        <title>The reference genome sequence of Saccharomyces cerevisiae: Then and now.</title>
        <authorList>
            <person name="Engel S.R."/>
            <person name="Dietrich F.S."/>
            <person name="Fisk D.G."/>
            <person name="Binkley G."/>
            <person name="Balakrishnan R."/>
            <person name="Costanzo M.C."/>
            <person name="Dwight S.S."/>
            <person name="Hitz B.C."/>
            <person name="Karra K."/>
            <person name="Nash R.S."/>
            <person name="Weng S."/>
            <person name="Wong E.D."/>
            <person name="Lloyd P."/>
            <person name="Skrzypek M.S."/>
            <person name="Miyasato S.R."/>
            <person name="Simison M."/>
            <person name="Cherry J.M."/>
        </authorList>
    </citation>
    <scope>GENOME REANNOTATION</scope>
    <source>
        <strain>ATCC 204508 / S288c</strain>
    </source>
</reference>
<reference key="5">
    <citation type="journal article" date="1993" name="FEBS Lett.">
        <title>Isolation and characterization of autophagy-defective mutants of Saccharomyces cerevisiae.</title>
        <authorList>
            <person name="Tsukada M."/>
            <person name="Ohsumi Y."/>
        </authorList>
    </citation>
    <scope>FUNCTION</scope>
</reference>
<reference key="6">
    <citation type="journal article" date="1996" name="J. Biol. Chem.">
        <title>Genetic and phenotypic overlap between autophagy and the cytoplasm to vacuole protein targeting pathway.</title>
        <authorList>
            <person name="Harding T.M."/>
            <person name="Hefner-Gravink A."/>
            <person name="Thumm M."/>
            <person name="Klionsky D.J."/>
        </authorList>
    </citation>
    <scope>FUNCTION</scope>
</reference>
<reference key="7">
    <citation type="journal article" date="1997" name="J. Bacteriol.">
        <title>AUT3, a serine/threonine kinase gene, is essential for autophagocytosis in Saccharomyces cerevisiae.</title>
        <authorList>
            <person name="Straub M."/>
            <person name="Bredschneider M."/>
            <person name="Thumm M."/>
        </authorList>
    </citation>
    <scope>FUNCTION</scope>
    <scope>SUBCELLULAR LOCATION</scope>
</reference>
<reference key="8">
    <citation type="journal article" date="2000" name="J. Biol. Chem.">
        <title>Apg13p and Vac8p are part of a complex of phosphoproteins that are required for cytoplasm to vacuole targeting.</title>
        <authorList>
            <person name="Scott S.V."/>
            <person name="Nice D.C. III"/>
            <person name="Nau J.J."/>
            <person name="Weisman L.S."/>
            <person name="Kamada Y."/>
            <person name="Keizer-Gunnink I."/>
            <person name="Funakoshi T."/>
            <person name="Veenhuis M."/>
            <person name="Ohsumi Y."/>
            <person name="Klionsky D.J."/>
        </authorList>
    </citation>
    <scope>SUBCELLULAR LOCATION</scope>
</reference>
<reference key="9">
    <citation type="journal article" date="2000" name="J. Cell Biol.">
        <title>Tor-mediated induction of autophagy via an Apg1 protein kinase complex.</title>
        <authorList>
            <person name="Kamada Y."/>
            <person name="Funakoshi T."/>
            <person name="Shintani T."/>
            <person name="Nagano K."/>
            <person name="Ohsumi M."/>
            <person name="Ohsumi Y."/>
        </authorList>
    </citation>
    <scope>FUNCTION</scope>
    <scope>ACTIVITY REGULATION</scope>
    <scope>MUTAGENESIS OF LYS-54</scope>
    <scope>INTERACTION WITH ATG11; ATG13 AND ATG17</scope>
</reference>
<reference key="10">
    <citation type="journal article" date="2001" name="EMBO J.">
        <title>The pre-autophagosomal structure organized by concerted functions of APG genes is essential for autophagosome formation.</title>
        <authorList>
            <person name="Suzuki K."/>
            <person name="Kirisako T."/>
            <person name="Kamada Y."/>
            <person name="Mizushima N."/>
            <person name="Noda T."/>
            <person name="Ohsumi Y."/>
        </authorList>
    </citation>
    <scope>FUNCTION</scope>
    <scope>SUBCELLULAR LOCATION</scope>
</reference>
<reference key="11">
    <citation type="journal article" date="2001" name="J. Cell Biol.">
        <title>Cvt9/Gsa9 functions in sequestering selective cytosolic cargo destined for the vacuole.</title>
        <authorList>
            <person name="Kim J."/>
            <person name="Kamada Y."/>
            <person name="Stromhaug P.E."/>
            <person name="Guan J."/>
            <person name="Hefner-Gravink A."/>
            <person name="Baba M."/>
            <person name="Scott S.V."/>
            <person name="Ohsumi Y."/>
            <person name="Dunn W.A. Jr."/>
            <person name="Klionsky D.J."/>
        </authorList>
    </citation>
    <scope>INTERACTION WITH ATG11</scope>
</reference>
<reference key="12">
    <citation type="journal article" date="2001" name="Mol. Cell. Biol.">
        <title>Antagonistic controls of autophagy and glycogen accumulation by Snf1p, the yeast homolog of AMP-activated protein kinase, and the cyclin-dependent kinase Pho85p.</title>
        <authorList>
            <person name="Wang Z."/>
            <person name="Wilson W.A."/>
            <person name="Fujino M.A."/>
            <person name="Roach P.J."/>
        </authorList>
    </citation>
    <scope>FUNCTION</scope>
</reference>
<reference key="13">
    <citation type="journal article" date="2002" name="FEBS Lett.">
        <title>Starvation-induced degradation of yeast hexose transporter Hxt7p is dependent on endocytosis, autophagy and the terminal sequences of the permease.</title>
        <authorList>
            <person name="Krampe S."/>
            <person name="Boles E."/>
        </authorList>
    </citation>
    <scope>FUNCTION</scope>
</reference>
<reference key="14">
    <citation type="journal article" date="2003" name="Dev. Cell">
        <title>A unified nomenclature for yeast autophagy-related genes.</title>
        <authorList>
            <person name="Klionsky D.J."/>
            <person name="Cregg J.M."/>
            <person name="Dunn W.A. Jr."/>
            <person name="Emr S.D."/>
            <person name="Sakai Y."/>
            <person name="Sandoval I.V."/>
            <person name="Sibirny A."/>
            <person name="Subramani S."/>
            <person name="Thumm M."/>
            <person name="Veenhuis M."/>
            <person name="Ohsumi Y."/>
        </authorList>
    </citation>
    <scope>NOMENCLATURE</scope>
</reference>
<reference key="15">
    <citation type="journal article" date="2003" name="Mol. Biol. Cell">
        <title>Chemical genetic analysis of Apg1 reveals a non-kinase role in the induction of autophagy.</title>
        <authorList>
            <person name="Abeliovich H."/>
            <person name="Zhang C."/>
            <person name="Dunn W.A. Jr."/>
            <person name="Shokat K.M."/>
            <person name="Klionsky D.J."/>
        </authorList>
    </citation>
    <scope>FUNCTION</scope>
    <scope>MUTAGENESIS OF LYS-54; MET-102; ASN-884 AND LEU-886</scope>
</reference>
<reference key="16">
    <citation type="journal article" date="2003" name="Nature">
        <title>Global analysis of protein localization in budding yeast.</title>
        <authorList>
            <person name="Huh W.-K."/>
            <person name="Falvo J.V."/>
            <person name="Gerke L.C."/>
            <person name="Carroll A.S."/>
            <person name="Howson R.W."/>
            <person name="Weissman J.S."/>
            <person name="O'Shea E.K."/>
        </authorList>
    </citation>
    <scope>SUBCELLULAR LOCATION [LARGE SCALE ANALYSIS]</scope>
</reference>
<reference key="17">
    <citation type="journal article" date="2003" name="Nature">
        <title>Global analysis of protein expression in yeast.</title>
        <authorList>
            <person name="Ghaemmaghami S."/>
            <person name="Huh W.-K."/>
            <person name="Bower K."/>
            <person name="Howson R.W."/>
            <person name="Belle A."/>
            <person name="Dephoure N."/>
            <person name="O'Shea E.K."/>
            <person name="Weissman J.S."/>
        </authorList>
    </citation>
    <scope>LEVEL OF PROTEIN EXPRESSION [LARGE SCALE ANALYSIS]</scope>
</reference>
<reference key="18">
    <citation type="journal article" date="2004" name="Dev. Cell">
        <title>The Atg1-Atg13 complex regulates Atg9 and Atg23 retrieval transport from the pre-autophagosomal structure.</title>
        <authorList>
            <person name="Reggiori F."/>
            <person name="Tucker K.A."/>
            <person name="Stromhaug P.E."/>
            <person name="Klionsky D.J."/>
        </authorList>
    </citation>
    <scope>FUNCTION</scope>
</reference>
<reference key="19">
    <citation type="journal article" date="2005" name="Mol. Cell. Proteomics">
        <title>Quantitative phosphoproteomics applied to the yeast pheromone signaling pathway.</title>
        <authorList>
            <person name="Gruhler A."/>
            <person name="Olsen J.V."/>
            <person name="Mohammed S."/>
            <person name="Mortensen P."/>
            <person name="Faergeman N.J."/>
            <person name="Mann M."/>
            <person name="Jensen O.N."/>
        </authorList>
    </citation>
    <scope>PHOSPHORYLATION [LARGE SCALE ANALYSIS] AT SER-677</scope>
    <scope>IDENTIFICATION BY MASS SPECTROMETRY [LARGE SCALE ANALYSIS]</scope>
    <source>
        <strain>YAL6B</strain>
    </source>
</reference>
<reference key="20">
    <citation type="journal article" date="2007" name="Autophagy">
        <title>Overexpression of autophagy-related genes inhibits yeast filamentous growth.</title>
        <authorList>
            <person name="Ma J."/>
            <person name="Jin R."/>
            <person name="Dobry C.J."/>
            <person name="Lawson S.K."/>
            <person name="Kumar A."/>
        </authorList>
    </citation>
    <scope>FUNCTION</scope>
</reference>
<reference key="21">
    <citation type="journal article" date="2007" name="Genes Cells">
        <title>Hierarchy of Atg proteins in pre-autophagosomal structure organization.</title>
        <authorList>
            <person name="Suzuki K."/>
            <person name="Kubota Y."/>
            <person name="Sekito T."/>
            <person name="Ohsumi Y."/>
        </authorList>
    </citation>
    <scope>FUNCTION</scope>
    <scope>SUBCELLULAR LOCATION</scope>
</reference>
<reference key="22">
    <citation type="journal article" date="2007" name="J. Proteome Res.">
        <title>Large-scale phosphorylation analysis of alpha-factor-arrested Saccharomyces cerevisiae.</title>
        <authorList>
            <person name="Li X."/>
            <person name="Gerber S.A."/>
            <person name="Rudner A.D."/>
            <person name="Beausoleil S.A."/>
            <person name="Haas W."/>
            <person name="Villen J."/>
            <person name="Elias J.E."/>
            <person name="Gygi S.P."/>
        </authorList>
    </citation>
    <scope>IDENTIFICATION BY MASS SPECTROMETRY [LARGE SCALE ANALYSIS]</scope>
    <source>
        <strain>ADR376</strain>
    </source>
</reference>
<reference key="23">
    <citation type="journal article" date="2007" name="Mol. Biol. Cell">
        <title>Protein kinase A and Sch9 cooperatively regulate induction of autophagy in Saccharomyces cerevisiae.</title>
        <authorList>
            <person name="Yorimitsu T."/>
            <person name="Zaman S."/>
            <person name="Broach J.R."/>
            <person name="Klionsky D.J."/>
        </authorList>
    </citation>
    <scope>PHOSPHORYLATION AT SER-508 AND SER-515 BY PKA</scope>
    <scope>MUTAGENESIS OF SER-508 AND SER-515</scope>
    <scope>FUNCTION</scope>
</reference>
<reference key="24">
    <citation type="journal article" date="2008" name="Autophagy">
        <title>Localization of autophagy-related proteins in yeast using a versatile plasmid-based resource of fluorescent protein fusions.</title>
        <authorList>
            <person name="Ma J."/>
            <person name="Bharucha N."/>
            <person name="Dobry C.J."/>
            <person name="Frisch R.L."/>
            <person name="Lawson S."/>
            <person name="Kumar A."/>
        </authorList>
    </citation>
    <scope>SUBCELLULAR LOCATION</scope>
</reference>
<reference key="25">
    <citation type="journal article" date="2008" name="J. Biol. Chem.">
        <title>Mitophagy in yeast occurs through a selective mechanism.</title>
        <authorList>
            <person name="Kanki T."/>
            <person name="Klionsky D.J."/>
        </authorList>
    </citation>
    <scope>FUNCTION</scope>
</reference>
<reference key="26">
    <citation type="journal article" date="2008" name="J. Cell Biol.">
        <title>In vivo reconstitution of autophagy in Saccharomyces cerevisiae.</title>
        <authorList>
            <person name="Cao Y."/>
            <person name="Cheong H."/>
            <person name="Song H."/>
            <person name="Klionsky D.J."/>
        </authorList>
    </citation>
    <scope>FUNCTION</scope>
    <scope>SUBCELLULAR LOCATION</scope>
</reference>
<reference key="27">
    <citation type="journal article" date="2008" name="Mol. Biol. Cell">
        <title>The Atg1 kinase complex is involved in the regulation of protein recruitment to initiate sequestering vesicle formation for nonspecific autophagy in Saccharomyces cerevisiae.</title>
        <authorList>
            <person name="Cheong H."/>
            <person name="Nair U."/>
            <person name="Geng J."/>
            <person name="Klionsky D.J."/>
        </authorList>
    </citation>
    <scope>FUNCTION</scope>
    <scope>INTERACTION WITH ATG13 AND ATG17</scope>
</reference>
<reference key="28">
    <citation type="journal article" date="2008" name="Mol. Biol. Cell">
        <title>Piecemeal microautophagy of the nucleus requires the core macroautophagy genes.</title>
        <authorList>
            <person name="Krick R."/>
            <person name="Muehe Y."/>
            <person name="Prick T."/>
            <person name="Bremer S."/>
            <person name="Schlotterhose P."/>
            <person name="Eskelinen E.L."/>
            <person name="Millen J."/>
            <person name="Goldfarb D.S."/>
            <person name="Thumm M."/>
        </authorList>
    </citation>
    <scope>FUNCTION</scope>
</reference>
<reference key="29">
    <citation type="journal article" date="2008" name="Mol. Cell. Proteomics">
        <title>A multidimensional chromatography technology for in-depth phosphoproteome analysis.</title>
        <authorList>
            <person name="Albuquerque C.P."/>
            <person name="Smolka M.B."/>
            <person name="Payne S.H."/>
            <person name="Bafna V."/>
            <person name="Eng J."/>
            <person name="Zhou H."/>
        </authorList>
    </citation>
    <scope>PHOSPHORYLATION [LARGE SCALE ANALYSIS] AT SER-390</scope>
    <scope>IDENTIFICATION BY MASS SPECTROMETRY [LARGE SCALE ANALYSIS]</scope>
</reference>
<reference key="30">
    <citation type="journal article" date="2009" name="Science">
        <title>Global analysis of Cdk1 substrate phosphorylation sites provides insights into evolution.</title>
        <authorList>
            <person name="Holt L.J."/>
            <person name="Tuch B.B."/>
            <person name="Villen J."/>
            <person name="Johnson A.D."/>
            <person name="Gygi S.P."/>
            <person name="Morgan D.O."/>
        </authorList>
    </citation>
    <scope>PHOSPHORYLATION [LARGE SCALE ANALYSIS] AT SER-635; SER-638 AND SER-647</scope>
    <scope>IDENTIFICATION BY MASS SPECTROMETRY [LARGE SCALE ANALYSIS]</scope>
</reference>
<reference key="31">
    <citation type="journal article" date="2010" name="Genetics">
        <title>Autophosphorylation within the Atg1 activation loop is required for both kinase activity and the induction of autophagy in Saccharomyces cerevisiae.</title>
        <authorList>
            <person name="Yeh Y.Y."/>
            <person name="Wrasman K."/>
            <person name="Herman P.K."/>
        </authorList>
    </citation>
    <scope>PHOSPHORYLATION AT THR-226 BY AUTOCATALYSIS</scope>
    <scope>MUTAGENESIS OF THR-226</scope>
    <scope>ACTIVITY REGULATION</scope>
    <scope>FUNCTION</scope>
</reference>
<reference key="32">
    <citation type="journal article" date="2010" name="J. Cell Biol.">
        <title>An Atg9-containing compartment that functions in the early steps of autophagosome biogenesis.</title>
        <authorList>
            <person name="Mari M."/>
            <person name="Griffith J."/>
            <person name="Rieter E."/>
            <person name="Krishnappa L."/>
            <person name="Klionsky D.J."/>
            <person name="Reggiori F."/>
        </authorList>
    </citation>
    <scope>FUNCTION</scope>
</reference>
<reference key="33">
    <citation type="journal article" date="2011" name="Autophagy">
        <title>The identification and analysis of phosphorylation sites on the Atg1 protein kinase.</title>
        <authorList>
            <person name="Yeh Y.Y."/>
            <person name="Shah K.H."/>
            <person name="Chou C.C."/>
            <person name="Hsiao H.H."/>
            <person name="Wrasman K.M."/>
            <person name="Stephan J.S."/>
            <person name="Stamatakos D."/>
            <person name="Khoo K.H."/>
            <person name="Herman P.K."/>
        </authorList>
    </citation>
    <scope>PHOSPHORYLATION AT SER-34; THR-129; SER-304; SER-365; SER-390; SER-515; SER-533; SER-551; SER-552; THR-590; SER-621; SER-677; SER-680; SER-683; SER-769 AND SER-783</scope>
    <scope>MUTAGENESIS OF SER-34; SER-551; SER-552; SER-621; SER-677; SER-680; SER-683; SER-769 AND SER-783</scope>
    <scope>FUNCTION</scope>
</reference>
<reference key="34">
    <citation type="journal article" date="2011" name="Autophagy">
        <title>Bidirectional regulation between TORC1 and autophagy in Saccharomyces cerevisiae.</title>
        <authorList>
            <person name="Shin C.S."/>
            <person name="Huh W.K."/>
        </authorList>
    </citation>
    <scope>FUNCTION</scope>
</reference>
<reference key="35">
    <citation type="journal article" date="2011" name="J. Biol. Chem.">
        <title>A new autophagy-related checkpoint in the degradation of an ERAD-M target.</title>
        <authorList>
            <person name="Kario E."/>
            <person name="Amar N."/>
            <person name="Elazar Z."/>
            <person name="Navon A."/>
        </authorList>
    </citation>
    <scope>FUNCTION</scope>
</reference>
<reference key="36">
    <citation type="journal article" date="2011" name="J. Biol. Chem.">
        <title>An Atg13 protein-mediated self-association of the Atg1 protein kinase is important for the induction of autophagy.</title>
        <authorList>
            <person name="Yeh Y.Y."/>
            <person name="Shah K.H."/>
            <person name="Herman P.K."/>
        </authorList>
    </citation>
    <scope>SUBUNIT</scope>
    <scope>INTERACTION WITH ATG13</scope>
    <scope>FUNCTION</scope>
</reference>
<reference key="37">
    <citation type="journal article" date="2011" name="J. Cell Biol.">
        <title>Two MAPK-signaling pathways are required for mitophagy in Saccharomyces cerevisiae.</title>
        <authorList>
            <person name="Mao K."/>
            <person name="Wang K."/>
            <person name="Zhao M."/>
            <person name="Xu T."/>
            <person name="Klionsky D.J."/>
        </authorList>
    </citation>
    <scope>FUNCTION</scope>
</reference>
<reference key="38">
    <citation type="journal article" date="2012" name="Cell Death Dis.">
        <title>14-3-3 protects against stress-induced apoptosis.</title>
        <authorList>
            <person name="Clapp C."/>
            <person name="Portt L."/>
            <person name="Khoury C."/>
            <person name="Sheibani S."/>
            <person name="Norman G."/>
            <person name="Ebner P."/>
            <person name="Eid R."/>
            <person name="Vali H."/>
            <person name="Mandato C.A."/>
            <person name="Madeo F."/>
            <person name="Greenwood M.T."/>
        </authorList>
    </citation>
    <scope>FUNCTION</scope>
</reference>
<reference key="39">
    <citation type="journal article" date="2012" name="EMBO J.">
        <title>Binding of the Atg1/ULK1 kinase to the ubiquitin-like protein Atg8 regulates autophagy.</title>
        <authorList>
            <person name="Kraft C."/>
            <person name="Kijanska M."/>
            <person name="Kalie E."/>
            <person name="Siergiejuk E."/>
            <person name="Lee S.S."/>
            <person name="Semplicio G."/>
            <person name="Stoffel I."/>
            <person name="Brezovich A."/>
            <person name="Verma M."/>
            <person name="Hansmann I."/>
            <person name="Ammerer G."/>
            <person name="Hofmann K."/>
            <person name="Tooze S."/>
            <person name="Peter M."/>
        </authorList>
    </citation>
    <scope>INTERACTION WITH ATG13 AND ATG8</scope>
    <scope>DOMAIN</scope>
    <scope>FUNCTION</scope>
    <scope>SUBCELLULAR LOCATION</scope>
</reference>
<reference key="40">
    <citation type="journal article" date="2012" name="J. Biol. Chem.">
        <title>Aggregate clearance of alpha-synuclein in Saccharomyces cerevisiae depends more on autophagosome and vacuole function than on the proteasome.</title>
        <authorList>
            <person name="Petroi D."/>
            <person name="Popova B."/>
            <person name="Taheri-Talesh N."/>
            <person name="Irniger S."/>
            <person name="Shahpasandzadeh H."/>
            <person name="Zweckstetter M."/>
            <person name="Outeiro T.F."/>
            <person name="Braus G.H."/>
        </authorList>
    </citation>
    <scope>FUNCTION</scope>
</reference>
<reference key="41">
    <citation type="journal article" date="2012" name="J. Biol. Chem.">
        <title>The autophagy-related protein kinase Atg1 interacts with the ubiquitin-like protein Atg8 via the Atg8 family interacting motif to facilitate autophagosome formation.</title>
        <authorList>
            <person name="Nakatogawa H."/>
            <person name="Ohbayashi S."/>
            <person name="Sakoh-Nakatogawa M."/>
            <person name="Kakuta S."/>
            <person name="Suzuki S.W."/>
            <person name="Kirisako H."/>
            <person name="Kondo-Kakuta C."/>
            <person name="Noda N.N."/>
            <person name="Yamamoto H."/>
            <person name="Ohsumi Y."/>
        </authorList>
    </citation>
    <scope>INTERACTION WITH ATG8</scope>
    <scope>SUBCELLULAR LOCATION</scope>
    <scope>DOMAIN</scope>
    <scope>MUTAGENESIS OF TYR-429 AND VAL-432</scope>
</reference>
<reference key="42">
    <citation type="journal article" date="2012" name="J. Biol. Chem.">
        <title>Phosphatidylinositol 4-kinases are required for autophagic membrane trafficking.</title>
        <authorList>
            <person name="Wang K."/>
            <person name="Yang Z."/>
            <person name="Liu X."/>
            <person name="Mao K."/>
            <person name="Nair U."/>
            <person name="Klionsky D.J."/>
        </authorList>
    </citation>
    <scope>FUNCTION</scope>
</reference>
<reference key="43">
    <citation type="journal article" date="2012" name="PLoS ONE">
        <title>A late form of nucleophagy in Saccharomyces cerevisiae.</title>
        <authorList>
            <person name="Mijaljica D."/>
            <person name="Prescott M."/>
            <person name="Devenish R.J."/>
        </authorList>
    </citation>
    <scope>FUNCTION</scope>
</reference>
<reference key="44">
    <citation type="journal article" date="2013" name="J. Cell Sci.">
        <title>Increased levels of reduced cytochrome b and mitophagy components are required to trigger nonspecific autophagy following induced mitochondrial dysfunction.</title>
        <authorList>
            <person name="Deffieu M."/>
            <person name="Bhatia-Kissova I."/>
            <person name="Salin B."/>
            <person name="Klionsky D.J."/>
            <person name="Pinson B."/>
            <person name="Manon S."/>
            <person name="Camougrand N."/>
        </authorList>
    </citation>
    <scope>FUNCTION</scope>
</reference>
<reference key="45">
    <citation type="journal article" date="2013" name="J. Cell Sci.">
        <title>Fine mapping of autophagy-related proteins during autophagosome formation in Saccharomyces cerevisiae.</title>
        <authorList>
            <person name="Suzuki K."/>
            <person name="Akioka M."/>
            <person name="Kondo-Kakuta C."/>
            <person name="Yamamoto H."/>
            <person name="Ohsumi Y."/>
        </authorList>
    </citation>
    <scope>SUBCELLULAR LOCATION</scope>
    <scope>FUNCTION</scope>
    <scope>MUTAGENESIS OF LYS-54 AND ASP-211</scope>
</reference>
<reference key="46">
    <citation type="journal article" date="2013" name="PLoS Genet.">
        <title>The role of autophagy in genome stability through suppression of abnormal mitosis under starvation.</title>
        <authorList>
            <person name="Matsui A."/>
            <person name="Kamada Y."/>
            <person name="Matsuura A."/>
        </authorList>
    </citation>
    <scope>FUNCTION</scope>
</reference>
<reference key="47">
    <citation type="journal article" date="2014" name="Autophagy">
        <title>Atg1 kinase organizes autophagosome formation by phosphorylating Atg9.</title>
        <authorList>
            <person name="Papinski D."/>
            <person name="Kraft C."/>
        </authorList>
    </citation>
    <scope>FUNCTION IN PHOSPHORYLATION OF ATG9</scope>
    <scope>CATALYTIC ACTIVITY</scope>
</reference>
<reference key="48">
    <citation type="journal article" date="2014" name="Mol. Cell">
        <title>Early steps in autophagy depend on direct phosphorylation of Atg9 by the Atg1 kinase.</title>
        <authorList>
            <person name="Papinski D."/>
            <person name="Schuschnig M."/>
            <person name="Reiter W."/>
            <person name="Wilhelm L."/>
            <person name="Barnes C.A."/>
            <person name="Maiolica A."/>
            <person name="Hansmann I."/>
            <person name="Pfaffenwimmer T."/>
            <person name="Kijanska M."/>
            <person name="Stoffel I."/>
            <person name="Lee S.S."/>
            <person name="Brezovich A."/>
            <person name="Lou J.H."/>
            <person name="Turk B.E."/>
            <person name="Aebersold R."/>
            <person name="Ammerer G."/>
            <person name="Peter M."/>
            <person name="Kraft C."/>
        </authorList>
    </citation>
    <scope>PHOSPHORYLATION AT SER-356; SER-390 AND SER-517</scope>
    <scope>FUNCTION</scope>
    <scope>CATALYTIC ACTIVITY</scope>
    <scope>MUTAGENESIS OF ASP-211</scope>
</reference>
<reference key="49">
    <citation type="journal article" date="2017" name="Nat. Commun.">
        <title>Atg4 proteolytic activity can be inhibited by Atg1 phosphorylation.</title>
        <authorList>
            <person name="Sanchez-Wandelmer J."/>
            <person name="Kriegenburg F."/>
            <person name="Rohringer S."/>
            <person name="Schuschnig M."/>
            <person name="Gomez-Sanchez R."/>
            <person name="Zens B."/>
            <person name="Abreu S."/>
            <person name="Hardenberg R."/>
            <person name="Hollenstein D."/>
            <person name="Gao J."/>
            <person name="Ungermann C."/>
            <person name="Martens S."/>
            <person name="Kraft C."/>
            <person name="Reggiori F."/>
        </authorList>
    </citation>
    <scope>FUNCTION</scope>
    <scope>CATALYTIC ACTIVITY</scope>
    <scope>MUTAGENESIS OF ASP-211</scope>
</reference>
<reference key="50">
    <citation type="journal article" date="2019" name="Proc. Natl. Acad. Sci. U.S.A.">
        <title>PP2C phosphatases promote autophagy by dephosphorylation of the Atg1 complex.</title>
        <authorList>
            <person name="Memisoglu G."/>
            <person name="Eapen V.V."/>
            <person name="Yang Y."/>
            <person name="Klionsky D.J."/>
            <person name="Haber J.E."/>
        </authorList>
    </citation>
    <scope>MUTAGENESIS OF THR-226</scope>
</reference>
<gene>
    <name evidence="43" type="primary">ATG1</name>
    <name evidence="45" type="synonym">APG1</name>
    <name evidence="46" type="synonym">AUT3</name>
    <name evidence="44" type="synonym">CVT10</name>
    <name evidence="48" type="ordered locus">YGL180W</name>
    <name type="ORF">G1615</name>
</gene>
<sequence length="897" mass="101717">MGDIKNKDHTTSVNHNLMASAGNYTAEKEIGKGSFATVYRGHLTSDKSQHVAIKEVSRAKLKNKKLLENLEIEIAILKKIKHPHIVGLIDCERTSTDFYLIMEYCALGDLTFLLKRRKELMENHPLLRTVFEKYPPPSENHNGLHRAFVLSYLQQLASALKFLRSKNLVHRDIKPQNLLLSTPLIGYHDSKSFHELGFVGIYNLPILKIADFGFARFLPNTSLAETLCGSPLYMAPEILNYQKYNAKADLWSVGTVVFEMCCGTPPFRASNHLELFKKIKRANDVITFPSYCNIEPELKELICSLLTFDPAQRIGFEEFFANKVVNEDLSSYELEDDLPELESKSKGIVESNMFVSEYLSKQPKSPNSNLAGHQSMADNPAELSDALKNSNILTAPAVKTDHTQAVDKKASNNKYHNSLVSDRSFEREYVVVEKKSVEVNSLADEVAQAGFNPNPIKHPTSTQNQNVLLNEQFSPNNQQYFQNQGENPRLLRATSSSSGGSDGSRRPSLVDRRLSISSLNPSNALSRALGIASTRLFGGANQQQQQQQITSSPPYSQTLLNSQLFHELTENIILRIDHLQHPETLKLDNTNIVSILESLAAKAFVVYSYAEVKFSQIVPLSTTLKGMANFENRRSMDSNAIAEEQDSDDAEEEDETLKKYKEDCLSTKTFGKGRTLSATSQLSATFNKLPRSEMILLCNEAIVLYMKALSILSKSMQVTSNWWYESQEKSCSLRVNVLVQWLREKFNECLEKADFLRLKINDLRFKHASEVAENQTLEEKGSSEEPVYLEKLLYDRALEISKMAAHMELKGENLYNCELAYATSLWMLETSLDDDDFTNAYGDYPFKTNIHLKSNDVEDKEKYHSVLDENDRIIIRKYIDSIANRLKILRQKMNHQN</sequence>
<protein>
    <recommendedName>
        <fullName evidence="47">Serine/threonine-protein kinase ATG1</fullName>
        <ecNumber evidence="35 36 37">2.7.11.1</ecNumber>
    </recommendedName>
    <alternativeName>
        <fullName evidence="46">Autophagy protein 3</fullName>
    </alternativeName>
    <alternativeName>
        <fullName evidence="43">Autophagy-related protein 1</fullName>
    </alternativeName>
    <alternativeName>
        <fullName evidence="44">Cytoplasm to vacuole targeting protein 10</fullName>
    </alternativeName>
</protein>
<keyword id="KW-0067">ATP-binding</keyword>
<keyword id="KW-0072">Autophagy</keyword>
<keyword id="KW-0963">Cytoplasm</keyword>
<keyword id="KW-0418">Kinase</keyword>
<keyword id="KW-0472">Membrane</keyword>
<keyword id="KW-0547">Nucleotide-binding</keyword>
<keyword id="KW-0597">Phosphoprotein</keyword>
<keyword id="KW-0653">Protein transport</keyword>
<keyword id="KW-1185">Reference proteome</keyword>
<keyword id="KW-0723">Serine/threonine-protein kinase</keyword>
<keyword id="KW-0808">Transferase</keyword>
<keyword id="KW-0813">Transport</keyword>
<comment type="function">
    <text evidence="4 6 7 8 9 11 12 13 14 15 16 17 18 19 20 21 22 23 24 25 26 27 29 30 31 32 33 34 35 36 37 39 40 41 42">Serine/threonine protein kinase involved in the cytoplasm to vacuole transport (Cvt) and found to be essential in autophagy, where it is required for the formation of autophagosomes. Involved in the clearance of protein aggregates which cannot be efficiently cleared by the proteasome. Required for selective autophagic degradation of the nucleus (nucleophagy) as well as for mitophagy which contributes to regulate mitochondrial quantity and quality by eliminating the mitochondria to a basal level to fulfill cellular energy requirements and preventing excess ROS production (PubMed:18818209, PubMed:21576396, PubMed:22768199, PubMed:23230142). Also involved in endoplasmic reticulum-specific autophagic process, in selective removal of ER-associated degradation (ERAD) substrates (PubMed:21228276). Plays a key role in ATG9 and ATG23 cycling through the pre-autophagosomal structure and is necessary to promote ATG18 binding to ATG9 through phosphorylation of ATG9 (PubMed:14723849, PubMed:20855505, PubMed:24440502, PubMed:24905091). Catalyzes phosphorylation of ATG4, decreasing the interaction between ATG4 and ATG8 and impairing deconjugation of PE-conjugated forms of ATG8 (PubMed:28821724). Finally, ATG1 is also required for the maintenance of cell viability under starvation and for glycogen storage during stationary phase. Plays a role in genome stability through suppression of abnormal mitosis under starvation, and in regulation of filamentous growth.</text>
</comment>
<comment type="catalytic activity">
    <reaction evidence="35 36 37">
        <text>L-seryl-[protein] + ATP = O-phospho-L-seryl-[protein] + ADP + H(+)</text>
        <dbReference type="Rhea" id="RHEA:17989"/>
        <dbReference type="Rhea" id="RHEA-COMP:9863"/>
        <dbReference type="Rhea" id="RHEA-COMP:11604"/>
        <dbReference type="ChEBI" id="CHEBI:15378"/>
        <dbReference type="ChEBI" id="CHEBI:29999"/>
        <dbReference type="ChEBI" id="CHEBI:30616"/>
        <dbReference type="ChEBI" id="CHEBI:83421"/>
        <dbReference type="ChEBI" id="CHEBI:456216"/>
        <dbReference type="EC" id="2.7.11.1"/>
    </reaction>
</comment>
<comment type="catalytic activity">
    <reaction evidence="35 36">
        <text>L-threonyl-[protein] + ATP = O-phospho-L-threonyl-[protein] + ADP + H(+)</text>
        <dbReference type="Rhea" id="RHEA:46608"/>
        <dbReference type="Rhea" id="RHEA-COMP:11060"/>
        <dbReference type="Rhea" id="RHEA-COMP:11605"/>
        <dbReference type="ChEBI" id="CHEBI:15378"/>
        <dbReference type="ChEBI" id="CHEBI:30013"/>
        <dbReference type="ChEBI" id="CHEBI:30616"/>
        <dbReference type="ChEBI" id="CHEBI:61977"/>
        <dbReference type="ChEBI" id="CHEBI:456216"/>
        <dbReference type="EC" id="2.7.11.1"/>
    </reaction>
</comment>
<comment type="activity regulation">
    <text evidence="4 19">Activated by hypophosphorylated form of ATG13 (present in nitrogen starvation conditions). Also activated by autophopsphorylation of Thr-226 and inhibited by phosphorylation of Ser-34.</text>
</comment>
<comment type="subunit">
    <text evidence="4 5 15 25 28 30">Homodimer. Dimerization requires the presence of ATG13. Forms a ternary complex with ATG13 and ATG17. Also interacts with ATG11.</text>
</comment>
<comment type="interaction">
    <interactant intactId="EBI-2657">
        <id>P53104</id>
    </interactant>
    <interactant intactId="EBI-31977">
        <id>Q12527</id>
        <label>ATG11</label>
    </interactant>
    <organismsDiffer>false</organismsDiffer>
    <experiments>3</experiments>
</comment>
<comment type="interaction">
    <interactant intactId="EBI-2657">
        <id>P53104</id>
    </interactant>
    <interactant intactId="EBI-36188">
        <id>Q06628</id>
        <label>ATG13</label>
    </interactant>
    <organismsDiffer>false</organismsDiffer>
    <experiments>18</experiments>
</comment>
<comment type="interaction">
    <interactant intactId="EBI-2657">
        <id>P53104</id>
    </interactant>
    <interactant intactId="EBI-29291">
        <id>P35193</id>
        <label>ATG19</label>
    </interactant>
    <organismsDiffer>false</organismsDiffer>
    <experiments>2</experiments>
</comment>
<comment type="interaction">
    <interactant intactId="EBI-2657">
        <id>P53104</id>
    </interactant>
    <interactant intactId="EBI-2684">
        <id>P38182</id>
        <label>ATG8</label>
    </interactant>
    <organismsDiffer>false</organismsDiffer>
    <experiments>3</experiments>
</comment>
<comment type="subcellular location">
    <subcellularLocation>
        <location>Cytoplasm</location>
    </subcellularLocation>
    <subcellularLocation>
        <location>Preautophagosomal structure membrane</location>
        <topology>Peripheral membrane protein</topology>
    </subcellularLocation>
    <text>Formes punctate structures in starvation conditions only when ATG13 and ATG17 were both present. Localizes to both the isolation membrane (IM) and the vacuole-isolation membrane contact site (VICS) during IM expansion. The IM is a membrane sac generated from the pre-autophagosomal structure that ultimately expands to become a mature autophagosome.</text>
</comment>
<comment type="domain">
    <text evidence="28 30">The LIR motif is required for the interaction with ATG8 and for the association of ATG1 with autophagosomes.</text>
</comment>
<comment type="PTM">
    <text evidence="13 19 22 35 42">Autophosphorylated at Thr-226 and Ser-390. The phosphorylation state may play a role in the induction of protein degradation upon starvation. Phosphorylation at Thr-226 within the activation loop is required for protein kinase activity whereas phosphorylation at Ser-34 leads to inhibition of kinase activity. Phosphorylation of Ser-508 and Ser-515 by PKA is required to induce autophagy but not for kinase activity.</text>
</comment>
<comment type="miscellaneous">
    <text evidence="10">Present with 1070 molecules/cell in log phase SD medium.</text>
</comment>
<comment type="similarity">
    <text evidence="1">Belongs to the protein kinase superfamily. Ser/Thr protein kinase family. APG1/unc-51/ULK1 subfamily.</text>
</comment>
<feature type="chain" id="PRO_0000085655" description="Serine/threonine-protein kinase ATG1">
    <location>
        <begin position="1"/>
        <end position="897"/>
    </location>
</feature>
<feature type="domain" description="Protein kinase" evidence="1">
    <location>
        <begin position="24"/>
        <end position="325"/>
    </location>
</feature>
<feature type="region of interest" description="Disordered" evidence="3">
    <location>
        <begin position="490"/>
        <end position="509"/>
    </location>
</feature>
<feature type="region of interest" description="Required for Cvt trafficking">
    <location>
        <begin position="880"/>
        <end position="886"/>
    </location>
</feature>
<feature type="short sequence motif" description="LIR">
    <location>
        <begin position="429"/>
        <end position="432"/>
    </location>
</feature>
<feature type="active site" description="Proton acceptor" evidence="1 2">
    <location>
        <position position="172"/>
    </location>
</feature>
<feature type="binding site" evidence="1">
    <location>
        <begin position="30"/>
        <end position="38"/>
    </location>
    <ligand>
        <name>ATP</name>
        <dbReference type="ChEBI" id="CHEBI:30616"/>
    </ligand>
</feature>
<feature type="binding site" evidence="1">
    <location>
        <position position="54"/>
    </location>
    <ligand>
        <name>ATP</name>
        <dbReference type="ChEBI" id="CHEBI:30616"/>
    </ligand>
</feature>
<feature type="modified residue" description="Phosphoserine" evidence="22">
    <location>
        <position position="34"/>
    </location>
</feature>
<feature type="modified residue" description="Phosphothreonine" evidence="22">
    <location>
        <position position="129"/>
    </location>
</feature>
<feature type="modified residue" description="Phosphothreonine; by autocatalysis" evidence="19">
    <location>
        <position position="226"/>
    </location>
</feature>
<feature type="modified residue" description="Phosphoserine" evidence="22">
    <location>
        <position position="304"/>
    </location>
</feature>
<feature type="modified residue" description="Phosphoserine; by autocatalysis" evidence="35">
    <location>
        <position position="356"/>
    </location>
</feature>
<feature type="modified residue" description="Phosphoserine" evidence="22">
    <location>
        <position position="365"/>
    </location>
</feature>
<feature type="modified residue" description="Phosphoserine; by autocatalysis" evidence="22 35 50">
    <location>
        <position position="390"/>
    </location>
</feature>
<feature type="modified residue" description="Phosphoserine; by PKA" evidence="13">
    <location>
        <position position="508"/>
    </location>
</feature>
<feature type="modified residue" description="Phosphoserine; by PKA" evidence="13 22">
    <location>
        <position position="515"/>
    </location>
</feature>
<feature type="modified residue" description="Phosphoserine; by autocatalysis" evidence="35">
    <location>
        <position position="517"/>
    </location>
</feature>
<feature type="modified residue" description="Phosphoserine" evidence="22">
    <location>
        <position position="533"/>
    </location>
</feature>
<feature type="modified residue" description="Phosphoserine" evidence="22">
    <location>
        <position position="551"/>
    </location>
</feature>
<feature type="modified residue" description="Phosphoserine" evidence="22">
    <location>
        <position position="552"/>
    </location>
</feature>
<feature type="modified residue" description="Phosphothreonine" evidence="22">
    <location>
        <position position="590"/>
    </location>
</feature>
<feature type="modified residue" description="Phosphoserine" evidence="22">
    <location>
        <position position="621"/>
    </location>
</feature>
<feature type="modified residue" description="Phosphoserine" evidence="51">
    <location>
        <position position="635"/>
    </location>
</feature>
<feature type="modified residue" description="Phosphoserine" evidence="51">
    <location>
        <position position="638"/>
    </location>
</feature>
<feature type="modified residue" description="Phosphoserine" evidence="51">
    <location>
        <position position="647"/>
    </location>
</feature>
<feature type="modified residue" description="Phosphoserine" evidence="22 49">
    <location>
        <position position="677"/>
    </location>
</feature>
<feature type="modified residue" description="Phosphoserine" evidence="22">
    <location>
        <position position="680"/>
    </location>
</feature>
<feature type="modified residue" description="Phosphoserine" evidence="22">
    <location>
        <position position="683"/>
    </location>
</feature>
<feature type="modified residue" description="Phosphoserine" evidence="22">
    <location>
        <position position="769"/>
    </location>
</feature>
<feature type="modified residue" description="Phosphoserine" evidence="22">
    <location>
        <position position="783"/>
    </location>
</feature>
<feature type="mutagenesis site" description="Impairs kinase activity." evidence="22">
    <original>S</original>
    <variation>D</variation>
    <variation>E</variation>
    <location>
        <position position="34"/>
    </location>
</feature>
<feature type="mutagenesis site" description="Defect in the Cvt pathway." evidence="4 9 34">
    <original>K</original>
    <variation>A</variation>
    <location>
        <position position="54"/>
    </location>
</feature>
<feature type="mutagenesis site" description="Enables the binding of the inhibitor of the kinase activity 1-NA-PP1." evidence="9">
    <original>M</original>
    <variation>A</variation>
    <location>
        <position position="102"/>
    </location>
</feature>
<feature type="mutagenesis site" description="Abolished kinase activity. Loss of cell viability under starvation." evidence="34 35 37 42">
    <original>D</original>
    <variation>A</variation>
    <location>
        <position position="211"/>
    </location>
</feature>
<feature type="mutagenesis site" description="Abolishes autophosphorylation." evidence="38">
    <original>T</original>
    <variation>A</variation>
    <location>
        <position position="226"/>
    </location>
</feature>
<feature type="mutagenesis site" description="Leads to constitutive autophosphorylation activity." evidence="19">
    <original>T</original>
    <variation>E</variation>
    <location>
        <position position="226"/>
    </location>
</feature>
<feature type="mutagenesis site" description="Loss of cell viability under starvation." evidence="42">
    <original>E</original>
    <variation>R</variation>
    <location>
        <position position="237"/>
    </location>
</feature>
<feature type="mutagenesis site" description="Impairs interaction with ATG8 and decreases autophagy efficiency; when associated with A-432." evidence="28">
    <original>Y</original>
    <variation>A</variation>
    <location>
        <position position="429"/>
    </location>
</feature>
<feature type="mutagenesis site" description="Impairs interaction with ATG8 and decreases autophagy efficiency; when associated with A-429." evidence="28">
    <original>V</original>
    <variation>A</variation>
    <location>
        <position position="432"/>
    </location>
</feature>
<feature type="mutagenesis site" description="Impairs autophagic activity; when associated with A-515." evidence="13">
    <original>S</original>
    <variation>A</variation>
    <location>
        <position position="508"/>
    </location>
</feature>
<feature type="mutagenesis site" description="Impairs autophagic activity; when associated with A-508." evidence="13">
    <original>S</original>
    <variation>A</variation>
    <location>
        <position position="515"/>
    </location>
</feature>
<feature type="mutagenesis site" description="Decreases autophagic activity." evidence="22">
    <original>S</original>
    <variation>A</variation>
    <location>
        <position position="551"/>
    </location>
</feature>
<feature type="mutagenesis site" description="Decreases autophagic activity." evidence="22">
    <original>S</original>
    <variation>A</variation>
    <location>
        <position position="552"/>
    </location>
</feature>
<feature type="mutagenesis site" description="Decreases autophagic activity." evidence="22">
    <original>S</original>
    <variation>A</variation>
    <location>
        <position position="621"/>
    </location>
</feature>
<feature type="mutagenesis site" description="Decreases autophagic activity." evidence="22">
    <original>S</original>
    <variation>A</variation>
    <location>
        <position position="677"/>
    </location>
</feature>
<feature type="mutagenesis site" description="Decreases autophagic activity." evidence="22">
    <original>S</original>
    <variation>A</variation>
    <location>
        <position position="680"/>
    </location>
</feature>
<feature type="mutagenesis site" description="Decreases autophagic activity." evidence="22">
    <original>S</original>
    <variation>A</variation>
    <location>
        <position position="683"/>
    </location>
</feature>
<feature type="mutagenesis site" description="Decreases autophagic activity." evidence="22">
    <original>S</original>
    <variation>A</variation>
    <location>
        <position position="769"/>
    </location>
</feature>
<feature type="mutagenesis site" description="Decreases autophagic activity." evidence="22">
    <original>S</original>
    <variation>A</variation>
    <location>
        <position position="783"/>
    </location>
</feature>
<feature type="mutagenesis site" description="No effect." evidence="9">
    <original>N</original>
    <variation>A</variation>
    <location>
        <position position="884"/>
    </location>
</feature>
<feature type="mutagenesis site" description="Cvt pathway specific block." evidence="9">
    <original>L</original>
    <variation>G</variation>
    <location>
        <position position="886"/>
    </location>
</feature>
<accession>P53104</accession>
<accession>D6VTX3</accession>
<organism>
    <name type="scientific">Saccharomyces cerevisiae (strain ATCC 204508 / S288c)</name>
    <name type="common">Baker's yeast</name>
    <dbReference type="NCBI Taxonomy" id="559292"/>
    <lineage>
        <taxon>Eukaryota</taxon>
        <taxon>Fungi</taxon>
        <taxon>Dikarya</taxon>
        <taxon>Ascomycota</taxon>
        <taxon>Saccharomycotina</taxon>
        <taxon>Saccharomycetes</taxon>
        <taxon>Saccharomycetales</taxon>
        <taxon>Saccharomycetaceae</taxon>
        <taxon>Saccharomyces</taxon>
    </lineage>
</organism>
<proteinExistence type="evidence at protein level"/>
<name>ATG1_YEAST</name>